<feature type="chain" id="PRO_1000144276" description="Large ribosomal subunit protein uL14">
    <location>
        <begin position="1"/>
        <end position="122"/>
    </location>
</feature>
<keyword id="KW-0687">Ribonucleoprotein</keyword>
<keyword id="KW-0689">Ribosomal protein</keyword>
<keyword id="KW-0694">RNA-binding</keyword>
<keyword id="KW-0699">rRNA-binding</keyword>
<proteinExistence type="inferred from homology"/>
<sequence>MIQMQTELQVADNSGAKRVECIKVLGGSHRRYASIGDVIKVTVKEASPRGKAKKGSVYNAVVVRTAKGVRRKDGSKVRFDGNAAVLLNANGQPIGTRIFGPVTRELRTEKFMKIVSLAPEVL</sequence>
<comment type="function">
    <text evidence="1">Binds to 23S rRNA. Forms part of two intersubunit bridges in the 70S ribosome.</text>
</comment>
<comment type="subunit">
    <text evidence="1">Part of the 50S ribosomal subunit. Forms a cluster with proteins L3 and L19. In the 70S ribosome, L14 and L19 interact and together make contacts with the 16S rRNA in bridges B5 and B8.</text>
</comment>
<comment type="similarity">
    <text evidence="1">Belongs to the universal ribosomal protein uL14 family.</text>
</comment>
<gene>
    <name evidence="1" type="primary">rplN</name>
    <name type="ordered locus">FTM_1517</name>
</gene>
<evidence type="ECO:0000255" key="1">
    <source>
        <dbReference type="HAMAP-Rule" id="MF_01367"/>
    </source>
</evidence>
<evidence type="ECO:0000305" key="2"/>
<protein>
    <recommendedName>
        <fullName evidence="1">Large ribosomal subunit protein uL14</fullName>
    </recommendedName>
    <alternativeName>
        <fullName evidence="2">50S ribosomal protein L14</fullName>
    </alternativeName>
</protein>
<dbReference type="EMBL" id="CP000915">
    <property type="protein sequence ID" value="ACD31339.1"/>
    <property type="molecule type" value="Genomic_DNA"/>
</dbReference>
<dbReference type="SMR" id="B2SDX5"/>
<dbReference type="KEGG" id="ftm:FTM_1517"/>
<dbReference type="HOGENOM" id="CLU_095071_2_1_6"/>
<dbReference type="GO" id="GO:0022625">
    <property type="term" value="C:cytosolic large ribosomal subunit"/>
    <property type="evidence" value="ECO:0007669"/>
    <property type="project" value="TreeGrafter"/>
</dbReference>
<dbReference type="GO" id="GO:0070180">
    <property type="term" value="F:large ribosomal subunit rRNA binding"/>
    <property type="evidence" value="ECO:0007669"/>
    <property type="project" value="TreeGrafter"/>
</dbReference>
<dbReference type="GO" id="GO:0003735">
    <property type="term" value="F:structural constituent of ribosome"/>
    <property type="evidence" value="ECO:0007669"/>
    <property type="project" value="InterPro"/>
</dbReference>
<dbReference type="GO" id="GO:0006412">
    <property type="term" value="P:translation"/>
    <property type="evidence" value="ECO:0007669"/>
    <property type="project" value="UniProtKB-UniRule"/>
</dbReference>
<dbReference type="CDD" id="cd00337">
    <property type="entry name" value="Ribosomal_uL14"/>
    <property type="match status" value="1"/>
</dbReference>
<dbReference type="FunFam" id="2.40.150.20:FF:000001">
    <property type="entry name" value="50S ribosomal protein L14"/>
    <property type="match status" value="1"/>
</dbReference>
<dbReference type="Gene3D" id="2.40.150.20">
    <property type="entry name" value="Ribosomal protein L14"/>
    <property type="match status" value="1"/>
</dbReference>
<dbReference type="HAMAP" id="MF_01367">
    <property type="entry name" value="Ribosomal_uL14"/>
    <property type="match status" value="1"/>
</dbReference>
<dbReference type="InterPro" id="IPR000218">
    <property type="entry name" value="Ribosomal_uL14"/>
</dbReference>
<dbReference type="InterPro" id="IPR005745">
    <property type="entry name" value="Ribosomal_uL14_bac-type"/>
</dbReference>
<dbReference type="InterPro" id="IPR019972">
    <property type="entry name" value="Ribosomal_uL14_CS"/>
</dbReference>
<dbReference type="InterPro" id="IPR036853">
    <property type="entry name" value="Ribosomal_uL14_sf"/>
</dbReference>
<dbReference type="NCBIfam" id="TIGR01067">
    <property type="entry name" value="rplN_bact"/>
    <property type="match status" value="1"/>
</dbReference>
<dbReference type="PANTHER" id="PTHR11761">
    <property type="entry name" value="50S/60S RIBOSOMAL PROTEIN L14/L23"/>
    <property type="match status" value="1"/>
</dbReference>
<dbReference type="PANTHER" id="PTHR11761:SF3">
    <property type="entry name" value="LARGE RIBOSOMAL SUBUNIT PROTEIN UL14M"/>
    <property type="match status" value="1"/>
</dbReference>
<dbReference type="Pfam" id="PF00238">
    <property type="entry name" value="Ribosomal_L14"/>
    <property type="match status" value="1"/>
</dbReference>
<dbReference type="SMART" id="SM01374">
    <property type="entry name" value="Ribosomal_L14"/>
    <property type="match status" value="1"/>
</dbReference>
<dbReference type="SUPFAM" id="SSF50193">
    <property type="entry name" value="Ribosomal protein L14"/>
    <property type="match status" value="1"/>
</dbReference>
<dbReference type="PROSITE" id="PS00049">
    <property type="entry name" value="RIBOSOMAL_L14"/>
    <property type="match status" value="1"/>
</dbReference>
<reference key="1">
    <citation type="journal article" date="2009" name="PLoS Pathog.">
        <title>Molecular evolutionary consequences of niche restriction in Francisella tularensis, a facultative intracellular pathogen.</title>
        <authorList>
            <person name="Larsson P."/>
            <person name="Elfsmark D."/>
            <person name="Svensson K."/>
            <person name="Wikstroem P."/>
            <person name="Forsman M."/>
            <person name="Brettin T."/>
            <person name="Keim P."/>
            <person name="Johansson A."/>
        </authorList>
    </citation>
    <scope>NUCLEOTIDE SEQUENCE [LARGE SCALE GENOMIC DNA]</scope>
    <source>
        <strain>FSC147</strain>
    </source>
</reference>
<name>RL14_FRATM</name>
<organism>
    <name type="scientific">Francisella tularensis subsp. mediasiatica (strain FSC147)</name>
    <dbReference type="NCBI Taxonomy" id="441952"/>
    <lineage>
        <taxon>Bacteria</taxon>
        <taxon>Pseudomonadati</taxon>
        <taxon>Pseudomonadota</taxon>
        <taxon>Gammaproteobacteria</taxon>
        <taxon>Thiotrichales</taxon>
        <taxon>Francisellaceae</taxon>
        <taxon>Francisella</taxon>
    </lineage>
</organism>
<accession>B2SDX5</accession>